<reference key="1">
    <citation type="journal article" date="2000" name="DNA Res.">
        <title>Prediction of the coding sequences of unidentified human genes. XVI. The complete sequences of 150 new cDNA clones from brain which code for large proteins in vitro.</title>
        <authorList>
            <person name="Nagase T."/>
            <person name="Kikuno R."/>
            <person name="Ishikawa K."/>
            <person name="Hirosawa M."/>
            <person name="Ohara O."/>
        </authorList>
    </citation>
    <scope>NUCLEOTIDE SEQUENCE [LARGE SCALE MRNA] (ISOFORM 1)</scope>
    <source>
        <tissue>Brain</tissue>
    </source>
</reference>
<reference key="2">
    <citation type="journal article" date="2002" name="DNA Res.">
        <title>Construction of expression-ready cDNA clones for KIAA genes: manual curation of 330 KIAA cDNA clones.</title>
        <authorList>
            <person name="Nakajima D."/>
            <person name="Okazaki N."/>
            <person name="Yamakawa H."/>
            <person name="Kikuno R."/>
            <person name="Ohara O."/>
            <person name="Nagase T."/>
        </authorList>
    </citation>
    <scope>SEQUENCE REVISION</scope>
</reference>
<reference key="3">
    <citation type="journal article" date="2007" name="BMC Genomics">
        <title>The full-ORF clone resource of the German cDNA consortium.</title>
        <authorList>
            <person name="Bechtel S."/>
            <person name="Rosenfelder H."/>
            <person name="Duda A."/>
            <person name="Schmidt C.P."/>
            <person name="Ernst U."/>
            <person name="Wellenreuther R."/>
            <person name="Mehrle A."/>
            <person name="Schuster C."/>
            <person name="Bahr A."/>
            <person name="Bloecker H."/>
            <person name="Heubner D."/>
            <person name="Hoerlein A."/>
            <person name="Michel G."/>
            <person name="Wedler H."/>
            <person name="Koehrer K."/>
            <person name="Ottenwaelder B."/>
            <person name="Poustka A."/>
            <person name="Wiemann S."/>
            <person name="Schupp I."/>
        </authorList>
    </citation>
    <scope>NUCLEOTIDE SEQUENCE [LARGE SCALE MRNA] (ISOFORMS 1 AND 2)</scope>
    <source>
        <tissue>Cerebellum</tissue>
        <tissue>Fetal kidney</tissue>
    </source>
</reference>
<reference key="4">
    <citation type="journal article" date="2005" name="Nature">
        <title>Generation and annotation of the DNA sequences of human chromosomes 2 and 4.</title>
        <authorList>
            <person name="Hillier L.W."/>
            <person name="Graves T.A."/>
            <person name="Fulton R.S."/>
            <person name="Fulton L.A."/>
            <person name="Pepin K.H."/>
            <person name="Minx P."/>
            <person name="Wagner-McPherson C."/>
            <person name="Layman D."/>
            <person name="Wylie K."/>
            <person name="Sekhon M."/>
            <person name="Becker M.C."/>
            <person name="Fewell G.A."/>
            <person name="Delehaunty K.D."/>
            <person name="Miner T.L."/>
            <person name="Nash W.E."/>
            <person name="Kremitzki C."/>
            <person name="Oddy L."/>
            <person name="Du H."/>
            <person name="Sun H."/>
            <person name="Bradshaw-Cordum H."/>
            <person name="Ali J."/>
            <person name="Carter J."/>
            <person name="Cordes M."/>
            <person name="Harris A."/>
            <person name="Isak A."/>
            <person name="van Brunt A."/>
            <person name="Nguyen C."/>
            <person name="Du F."/>
            <person name="Courtney L."/>
            <person name="Kalicki J."/>
            <person name="Ozersky P."/>
            <person name="Abbott S."/>
            <person name="Armstrong J."/>
            <person name="Belter E.A."/>
            <person name="Caruso L."/>
            <person name="Cedroni M."/>
            <person name="Cotton M."/>
            <person name="Davidson T."/>
            <person name="Desai A."/>
            <person name="Elliott G."/>
            <person name="Erb T."/>
            <person name="Fronick C."/>
            <person name="Gaige T."/>
            <person name="Haakenson W."/>
            <person name="Haglund K."/>
            <person name="Holmes A."/>
            <person name="Harkins R."/>
            <person name="Kim K."/>
            <person name="Kruchowski S.S."/>
            <person name="Strong C.M."/>
            <person name="Grewal N."/>
            <person name="Goyea E."/>
            <person name="Hou S."/>
            <person name="Levy A."/>
            <person name="Martinka S."/>
            <person name="Mead K."/>
            <person name="McLellan M.D."/>
            <person name="Meyer R."/>
            <person name="Randall-Maher J."/>
            <person name="Tomlinson C."/>
            <person name="Dauphin-Kohlberg S."/>
            <person name="Kozlowicz-Reilly A."/>
            <person name="Shah N."/>
            <person name="Swearengen-Shahid S."/>
            <person name="Snider J."/>
            <person name="Strong J.T."/>
            <person name="Thompson J."/>
            <person name="Yoakum M."/>
            <person name="Leonard S."/>
            <person name="Pearman C."/>
            <person name="Trani L."/>
            <person name="Radionenko M."/>
            <person name="Waligorski J.E."/>
            <person name="Wang C."/>
            <person name="Rock S.M."/>
            <person name="Tin-Wollam A.-M."/>
            <person name="Maupin R."/>
            <person name="Latreille P."/>
            <person name="Wendl M.C."/>
            <person name="Yang S.-P."/>
            <person name="Pohl C."/>
            <person name="Wallis J.W."/>
            <person name="Spieth J."/>
            <person name="Bieri T.A."/>
            <person name="Berkowicz N."/>
            <person name="Nelson J.O."/>
            <person name="Osborne J."/>
            <person name="Ding L."/>
            <person name="Meyer R."/>
            <person name="Sabo A."/>
            <person name="Shotland Y."/>
            <person name="Sinha P."/>
            <person name="Wohldmann P.E."/>
            <person name="Cook L.L."/>
            <person name="Hickenbotham M.T."/>
            <person name="Eldred J."/>
            <person name="Williams D."/>
            <person name="Jones T.A."/>
            <person name="She X."/>
            <person name="Ciccarelli F.D."/>
            <person name="Izaurralde E."/>
            <person name="Taylor J."/>
            <person name="Schmutz J."/>
            <person name="Myers R.M."/>
            <person name="Cox D.R."/>
            <person name="Huang X."/>
            <person name="McPherson J.D."/>
            <person name="Mardis E.R."/>
            <person name="Clifton S.W."/>
            <person name="Warren W.C."/>
            <person name="Chinwalla A.T."/>
            <person name="Eddy S.R."/>
            <person name="Marra M.A."/>
            <person name="Ovcharenko I."/>
            <person name="Furey T.S."/>
            <person name="Miller W."/>
            <person name="Eichler E.E."/>
            <person name="Bork P."/>
            <person name="Suyama M."/>
            <person name="Torrents D."/>
            <person name="Waterston R.H."/>
            <person name="Wilson R.K."/>
        </authorList>
    </citation>
    <scope>NUCLEOTIDE SEQUENCE [LARGE SCALE GENOMIC DNA]</scope>
</reference>
<reference key="5">
    <citation type="submission" date="2005-07" db="EMBL/GenBank/DDBJ databases">
        <authorList>
            <person name="Mural R.J."/>
            <person name="Istrail S."/>
            <person name="Sutton G.G."/>
            <person name="Florea L."/>
            <person name="Halpern A.L."/>
            <person name="Mobarry C.M."/>
            <person name="Lippert R."/>
            <person name="Walenz B."/>
            <person name="Shatkay H."/>
            <person name="Dew I."/>
            <person name="Miller J.R."/>
            <person name="Flanigan M.J."/>
            <person name="Edwards N.J."/>
            <person name="Bolanos R."/>
            <person name="Fasulo D."/>
            <person name="Halldorsson B.V."/>
            <person name="Hannenhalli S."/>
            <person name="Turner R."/>
            <person name="Yooseph S."/>
            <person name="Lu F."/>
            <person name="Nusskern D.R."/>
            <person name="Shue B.C."/>
            <person name="Zheng X.H."/>
            <person name="Zhong F."/>
            <person name="Delcher A.L."/>
            <person name="Huson D.H."/>
            <person name="Kravitz S.A."/>
            <person name="Mouchard L."/>
            <person name="Reinert K."/>
            <person name="Remington K.A."/>
            <person name="Clark A.G."/>
            <person name="Waterman M.S."/>
            <person name="Eichler E.E."/>
            <person name="Adams M.D."/>
            <person name="Hunkapiller M.W."/>
            <person name="Myers E.W."/>
            <person name="Venter J.C."/>
        </authorList>
    </citation>
    <scope>NUCLEOTIDE SEQUENCE [LARGE SCALE GENOMIC DNA]</scope>
</reference>
<reference key="6">
    <citation type="journal article" date="2004" name="Genome Res.">
        <title>The status, quality, and expansion of the NIH full-length cDNA project: the Mammalian Gene Collection (MGC).</title>
        <authorList>
            <consortium name="The MGC Project Team"/>
        </authorList>
    </citation>
    <scope>NUCLEOTIDE SEQUENCE [LARGE SCALE MRNA] (ISOFORM 1)</scope>
    <scope>VARIANT ARG-520</scope>
    <source>
        <tissue>Brain</tissue>
    </source>
</reference>
<reference key="7">
    <citation type="journal article" date="2009" name="J. Biol. Chem.">
        <title>Control of rapsyn stability by the CUL-3-containing E3 ligase complex.</title>
        <authorList>
            <person name="Nam S."/>
            <person name="Min K."/>
            <person name="Hwang H."/>
            <person name="Lee H.O."/>
            <person name="Lee J.H."/>
            <person name="Yoon J."/>
            <person name="Lee H."/>
            <person name="Park S."/>
            <person name="Lee J."/>
        </authorList>
    </citation>
    <scope>FUNCTION</scope>
    <scope>IDENTIFICATION IN A BCR (BTB-CUL3-RBX1) E3 UBIQUITIN LIGASE COMPLEX</scope>
    <scope>INTERACTION WITH RAPSN</scope>
</reference>
<reference key="8">
    <citation type="journal article" date="2012" name="Proc. Natl. Acad. Sci. U.S.A.">
        <title>N-terminal acetylome analyses and functional insights of the N-terminal acetyltransferase NatB.</title>
        <authorList>
            <person name="Van Damme P."/>
            <person name="Lasa M."/>
            <person name="Polevoda B."/>
            <person name="Gazquez C."/>
            <person name="Elosegui-Artola A."/>
            <person name="Kim D.S."/>
            <person name="De Juan-Pardo E."/>
            <person name="Demeyer K."/>
            <person name="Hole K."/>
            <person name="Larrea E."/>
            <person name="Timmerman E."/>
            <person name="Prieto J."/>
            <person name="Arnesen T."/>
            <person name="Sherman F."/>
            <person name="Gevaert K."/>
            <person name="Aldabe R."/>
        </authorList>
    </citation>
    <scope>ACETYLATION [LARGE SCALE ANALYSIS] AT ALA-2</scope>
    <scope>CLEAVAGE OF INITIATOR METHIONINE [LARGE SCALE ANALYSIS]</scope>
    <scope>IDENTIFICATION BY MASS SPECTROMETRY [LARGE SCALE ANALYSIS]</scope>
</reference>
<accession>Q9P2G9</accession>
<accession>Q53XA3</accession>
<accession>Q6N018</accession>
<name>KLHL8_HUMAN</name>
<gene>
    <name type="primary">KLHL8</name>
    <name type="synonym">KIAA1378</name>
</gene>
<organism>
    <name type="scientific">Homo sapiens</name>
    <name type="common">Human</name>
    <dbReference type="NCBI Taxonomy" id="9606"/>
    <lineage>
        <taxon>Eukaryota</taxon>
        <taxon>Metazoa</taxon>
        <taxon>Chordata</taxon>
        <taxon>Craniata</taxon>
        <taxon>Vertebrata</taxon>
        <taxon>Euteleostomi</taxon>
        <taxon>Mammalia</taxon>
        <taxon>Eutheria</taxon>
        <taxon>Euarchontoglires</taxon>
        <taxon>Primates</taxon>
        <taxon>Haplorrhini</taxon>
        <taxon>Catarrhini</taxon>
        <taxon>Hominidae</taxon>
        <taxon>Homo</taxon>
    </lineage>
</organism>
<dbReference type="EMBL" id="AB037799">
    <property type="protein sequence ID" value="BAA92616.2"/>
    <property type="status" value="ALT_INIT"/>
    <property type="molecule type" value="mRNA"/>
</dbReference>
<dbReference type="EMBL" id="BX640727">
    <property type="protein sequence ID" value="CAE45843.1"/>
    <property type="molecule type" value="mRNA"/>
</dbReference>
<dbReference type="EMBL" id="BX640744">
    <property type="protein sequence ID" value="CAE45855.1"/>
    <property type="molecule type" value="mRNA"/>
</dbReference>
<dbReference type="EMBL" id="AC092658">
    <property type="status" value="NOT_ANNOTATED_CDS"/>
    <property type="molecule type" value="Genomic_DNA"/>
</dbReference>
<dbReference type="EMBL" id="AC108516">
    <property type="status" value="NOT_ANNOTATED_CDS"/>
    <property type="molecule type" value="Genomic_DNA"/>
</dbReference>
<dbReference type="EMBL" id="CH471057">
    <property type="protein sequence ID" value="EAX05982.1"/>
    <property type="molecule type" value="Genomic_DNA"/>
</dbReference>
<dbReference type="EMBL" id="BC041384">
    <property type="protein sequence ID" value="AAH41384.1"/>
    <property type="molecule type" value="mRNA"/>
</dbReference>
<dbReference type="CCDS" id="CCDS3617.1">
    <molecule id="Q9P2G9-1"/>
</dbReference>
<dbReference type="CCDS" id="CCDS77937.1">
    <molecule id="Q9P2G9-2"/>
</dbReference>
<dbReference type="RefSeq" id="NP_001278932.1">
    <molecule id="Q9P2G9-1"/>
    <property type="nucleotide sequence ID" value="NM_001292003.2"/>
</dbReference>
<dbReference type="RefSeq" id="NP_001278935.1">
    <molecule id="Q9P2G9-2"/>
    <property type="nucleotide sequence ID" value="NM_001292006.2"/>
</dbReference>
<dbReference type="RefSeq" id="NP_001278936.1">
    <property type="nucleotide sequence ID" value="NM_001292007.1"/>
</dbReference>
<dbReference type="RefSeq" id="NP_065854.3">
    <molecule id="Q9P2G9-1"/>
    <property type="nucleotide sequence ID" value="NM_020803.4"/>
</dbReference>
<dbReference type="RefSeq" id="XP_047271967.1">
    <molecule id="Q9P2G9-1"/>
    <property type="nucleotide sequence ID" value="XM_047416011.1"/>
</dbReference>
<dbReference type="RefSeq" id="XP_047271968.1">
    <molecule id="Q9P2G9-1"/>
    <property type="nucleotide sequence ID" value="XM_047416012.1"/>
</dbReference>
<dbReference type="RefSeq" id="XP_047271969.1">
    <molecule id="Q9P2G9-1"/>
    <property type="nucleotide sequence ID" value="XM_047416013.1"/>
</dbReference>
<dbReference type="RefSeq" id="XP_054206568.1">
    <molecule id="Q9P2G9-1"/>
    <property type="nucleotide sequence ID" value="XM_054350593.1"/>
</dbReference>
<dbReference type="RefSeq" id="XP_054206569.1">
    <molecule id="Q9P2G9-1"/>
    <property type="nucleotide sequence ID" value="XM_054350594.1"/>
</dbReference>
<dbReference type="RefSeq" id="XP_054206570.1">
    <molecule id="Q9P2G9-1"/>
    <property type="nucleotide sequence ID" value="XM_054350595.1"/>
</dbReference>
<dbReference type="SMR" id="Q9P2G9"/>
<dbReference type="BioGRID" id="121618">
    <property type="interactions" value="112"/>
</dbReference>
<dbReference type="ComplexPortal" id="CPX-8085">
    <property type="entry name" value="CRL3 E3 ubiquitin ligase complex, KLHL8 variant"/>
</dbReference>
<dbReference type="CORUM" id="Q9P2G9"/>
<dbReference type="FunCoup" id="Q9P2G9">
    <property type="interactions" value="676"/>
</dbReference>
<dbReference type="IntAct" id="Q9P2G9">
    <property type="interactions" value="75"/>
</dbReference>
<dbReference type="MINT" id="Q9P2G9"/>
<dbReference type="STRING" id="9606.ENSP00000273963"/>
<dbReference type="GlyGen" id="Q9P2G9">
    <property type="glycosylation" value="1 site, 1 O-linked glycan (1 site)"/>
</dbReference>
<dbReference type="iPTMnet" id="Q9P2G9"/>
<dbReference type="PhosphoSitePlus" id="Q9P2G9"/>
<dbReference type="BioMuta" id="KLHL8"/>
<dbReference type="DMDM" id="124056473"/>
<dbReference type="jPOST" id="Q9P2G9"/>
<dbReference type="MassIVE" id="Q9P2G9"/>
<dbReference type="PaxDb" id="9606-ENSP00000273963"/>
<dbReference type="PeptideAtlas" id="Q9P2G9"/>
<dbReference type="ProteomicsDB" id="66596"/>
<dbReference type="ProteomicsDB" id="83814">
    <molecule id="Q9P2G9-1"/>
</dbReference>
<dbReference type="Pumba" id="Q9P2G9"/>
<dbReference type="Antibodypedia" id="2897">
    <property type="antibodies" value="100 antibodies from 20 providers"/>
</dbReference>
<dbReference type="DNASU" id="57563"/>
<dbReference type="Ensembl" id="ENST00000273963.10">
    <molecule id="Q9P2G9-1"/>
    <property type="protein sequence ID" value="ENSP00000273963.5"/>
    <property type="gene ID" value="ENSG00000145332.14"/>
</dbReference>
<dbReference type="Ensembl" id="ENST00000498875.6">
    <molecule id="Q9P2G9-2"/>
    <property type="protein sequence ID" value="ENSP00000426451.1"/>
    <property type="gene ID" value="ENSG00000145332.14"/>
</dbReference>
<dbReference type="Ensembl" id="ENST00000512111.1">
    <molecule id="Q9P2G9-1"/>
    <property type="protein sequence ID" value="ENSP00000424131.1"/>
    <property type="gene ID" value="ENSG00000145332.14"/>
</dbReference>
<dbReference type="GeneID" id="57563"/>
<dbReference type="KEGG" id="hsa:57563"/>
<dbReference type="MANE-Select" id="ENST00000273963.10">
    <property type="protein sequence ID" value="ENSP00000273963.5"/>
    <property type="RefSeq nucleotide sequence ID" value="NM_020803.5"/>
    <property type="RefSeq protein sequence ID" value="NP_065854.3"/>
</dbReference>
<dbReference type="UCSC" id="uc003hql.2">
    <molecule id="Q9P2G9-1"/>
    <property type="organism name" value="human"/>
</dbReference>
<dbReference type="AGR" id="HGNC:18644"/>
<dbReference type="CTD" id="57563"/>
<dbReference type="DisGeNET" id="57563"/>
<dbReference type="GeneCards" id="KLHL8"/>
<dbReference type="HGNC" id="HGNC:18644">
    <property type="gene designation" value="KLHL8"/>
</dbReference>
<dbReference type="HPA" id="ENSG00000145332">
    <property type="expression patterns" value="Tissue enhanced (epididymis)"/>
</dbReference>
<dbReference type="MIM" id="611967">
    <property type="type" value="gene"/>
</dbReference>
<dbReference type="neXtProt" id="NX_Q9P2G9"/>
<dbReference type="OpenTargets" id="ENSG00000145332"/>
<dbReference type="PharmGKB" id="PA38616"/>
<dbReference type="VEuPathDB" id="HostDB:ENSG00000145332"/>
<dbReference type="eggNOG" id="KOG4441">
    <property type="taxonomic scope" value="Eukaryota"/>
</dbReference>
<dbReference type="GeneTree" id="ENSGT00940000157583"/>
<dbReference type="InParanoid" id="Q9P2G9"/>
<dbReference type="OMA" id="VRPMSTS"/>
<dbReference type="OrthoDB" id="45365at2759"/>
<dbReference type="PAN-GO" id="Q9P2G9">
    <property type="GO annotations" value="0 GO annotations based on evolutionary models"/>
</dbReference>
<dbReference type="PhylomeDB" id="Q9P2G9"/>
<dbReference type="TreeFam" id="TF329218"/>
<dbReference type="PathwayCommons" id="Q9P2G9"/>
<dbReference type="SignaLink" id="Q9P2G9"/>
<dbReference type="SIGNOR" id="Q9P2G9"/>
<dbReference type="UniPathway" id="UPA00143"/>
<dbReference type="BioGRID-ORCS" id="57563">
    <property type="hits" value="14 hits in 1194 CRISPR screens"/>
</dbReference>
<dbReference type="ChiTaRS" id="KLHL8">
    <property type="organism name" value="human"/>
</dbReference>
<dbReference type="GeneWiki" id="KLHL8"/>
<dbReference type="GenomeRNAi" id="57563"/>
<dbReference type="Pharos" id="Q9P2G9">
    <property type="development level" value="Tdark"/>
</dbReference>
<dbReference type="PRO" id="PR:Q9P2G9"/>
<dbReference type="Proteomes" id="UP000005640">
    <property type="component" value="Chromosome 4"/>
</dbReference>
<dbReference type="RNAct" id="Q9P2G9">
    <property type="molecule type" value="protein"/>
</dbReference>
<dbReference type="Bgee" id="ENSG00000145332">
    <property type="expression patterns" value="Expressed in corpus epididymis and 190 other cell types or tissues"/>
</dbReference>
<dbReference type="ExpressionAtlas" id="Q9P2G9">
    <property type="expression patterns" value="baseline and differential"/>
</dbReference>
<dbReference type="GO" id="GO:0031463">
    <property type="term" value="C:Cul3-RING ubiquitin ligase complex"/>
    <property type="evidence" value="ECO:0000314"/>
    <property type="project" value="UniProtKB"/>
</dbReference>
<dbReference type="GO" id="GO:0005737">
    <property type="term" value="C:cytoplasm"/>
    <property type="evidence" value="ECO:0000318"/>
    <property type="project" value="GO_Central"/>
</dbReference>
<dbReference type="GO" id="GO:0005654">
    <property type="term" value="C:nucleoplasm"/>
    <property type="evidence" value="ECO:0000314"/>
    <property type="project" value="HPA"/>
</dbReference>
<dbReference type="GO" id="GO:1990756">
    <property type="term" value="F:ubiquitin-like ligase-substrate adaptor activity"/>
    <property type="evidence" value="ECO:0000318"/>
    <property type="project" value="GO_Central"/>
</dbReference>
<dbReference type="GO" id="GO:0043161">
    <property type="term" value="P:proteasome-mediated ubiquitin-dependent protein catabolic process"/>
    <property type="evidence" value="ECO:0000318"/>
    <property type="project" value="GO_Central"/>
</dbReference>
<dbReference type="GO" id="GO:0016567">
    <property type="term" value="P:protein ubiquitination"/>
    <property type="evidence" value="ECO:0000314"/>
    <property type="project" value="UniProtKB"/>
</dbReference>
<dbReference type="GO" id="GO:0006511">
    <property type="term" value="P:ubiquitin-dependent protein catabolic process"/>
    <property type="evidence" value="ECO:0000314"/>
    <property type="project" value="UniProtKB"/>
</dbReference>
<dbReference type="CDD" id="cd18448">
    <property type="entry name" value="BACK_KLHL8"/>
    <property type="match status" value="1"/>
</dbReference>
<dbReference type="CDD" id="cd18238">
    <property type="entry name" value="BTB_POZ_KLHL8"/>
    <property type="match status" value="1"/>
</dbReference>
<dbReference type="FunFam" id="1.25.40.420:FF:000001">
    <property type="entry name" value="Kelch-like family member 12"/>
    <property type="match status" value="1"/>
</dbReference>
<dbReference type="FunFam" id="2.120.10.80:FF:000070">
    <property type="entry name" value="kelch-like protein 8 isoform X1"/>
    <property type="match status" value="1"/>
</dbReference>
<dbReference type="FunFam" id="3.30.710.10:FF:000066">
    <property type="entry name" value="kelch-like protein 8 isoform X1"/>
    <property type="match status" value="1"/>
</dbReference>
<dbReference type="Gene3D" id="1.25.40.420">
    <property type="match status" value="1"/>
</dbReference>
<dbReference type="Gene3D" id="2.120.10.80">
    <property type="entry name" value="Kelch-type beta propeller"/>
    <property type="match status" value="2"/>
</dbReference>
<dbReference type="Gene3D" id="3.30.710.10">
    <property type="entry name" value="Potassium Channel Kv1.1, Chain A"/>
    <property type="match status" value="1"/>
</dbReference>
<dbReference type="InterPro" id="IPR011705">
    <property type="entry name" value="BACK"/>
</dbReference>
<dbReference type="InterPro" id="IPR017096">
    <property type="entry name" value="BTB-kelch_protein"/>
</dbReference>
<dbReference type="InterPro" id="IPR000210">
    <property type="entry name" value="BTB/POZ_dom"/>
</dbReference>
<dbReference type="InterPro" id="IPR011043">
    <property type="entry name" value="Gal_Oxase/kelch_b-propeller"/>
</dbReference>
<dbReference type="InterPro" id="IPR015915">
    <property type="entry name" value="Kelch-typ_b-propeller"/>
</dbReference>
<dbReference type="InterPro" id="IPR006652">
    <property type="entry name" value="Kelch_1"/>
</dbReference>
<dbReference type="InterPro" id="IPR011333">
    <property type="entry name" value="SKP1/BTB/POZ_sf"/>
</dbReference>
<dbReference type="PANTHER" id="PTHR24412">
    <property type="entry name" value="KELCH PROTEIN"/>
    <property type="match status" value="1"/>
</dbReference>
<dbReference type="PANTHER" id="PTHR24412:SF480">
    <property type="entry name" value="KELCH-LIKE PROTEIN 8"/>
    <property type="match status" value="1"/>
</dbReference>
<dbReference type="Pfam" id="PF07707">
    <property type="entry name" value="BACK"/>
    <property type="match status" value="1"/>
</dbReference>
<dbReference type="Pfam" id="PF00651">
    <property type="entry name" value="BTB"/>
    <property type="match status" value="1"/>
</dbReference>
<dbReference type="Pfam" id="PF01344">
    <property type="entry name" value="Kelch_1"/>
    <property type="match status" value="2"/>
</dbReference>
<dbReference type="Pfam" id="PF24681">
    <property type="entry name" value="Kelch_KLHDC2_KLHL20_DRC7"/>
    <property type="match status" value="1"/>
</dbReference>
<dbReference type="PIRSF" id="PIRSF037037">
    <property type="entry name" value="Kelch-like_protein_gigaxonin"/>
    <property type="match status" value="1"/>
</dbReference>
<dbReference type="PRINTS" id="PR00501">
    <property type="entry name" value="KELCHREPEAT"/>
</dbReference>
<dbReference type="SMART" id="SM00875">
    <property type="entry name" value="BACK"/>
    <property type="match status" value="1"/>
</dbReference>
<dbReference type="SMART" id="SM00225">
    <property type="entry name" value="BTB"/>
    <property type="match status" value="1"/>
</dbReference>
<dbReference type="SMART" id="SM00612">
    <property type="entry name" value="Kelch"/>
    <property type="match status" value="6"/>
</dbReference>
<dbReference type="SUPFAM" id="SSF50965">
    <property type="entry name" value="Galactose oxidase, central domain"/>
    <property type="match status" value="1"/>
</dbReference>
<dbReference type="SUPFAM" id="SSF54695">
    <property type="entry name" value="POZ domain"/>
    <property type="match status" value="1"/>
</dbReference>
<dbReference type="PROSITE" id="PS50097">
    <property type="entry name" value="BTB"/>
    <property type="match status" value="1"/>
</dbReference>
<sequence length="620" mass="68802">MASDSMSSKQARNHITKGKRQQQHQQIKNRSSISDGDGEDSFIFEANEAWKDFHGSLLRFYENGELCDVTLKVGSKLISCHKLVLACVIPYFRAMFLSEMAEAKQTLIEIRDFDGDAIEDLVKFVYSSRLTLTVDNVQPLLYAACILQVELVARACCEYMKLHFHPSNCLAVRAFAESHNRIDLMDMADQYACDHFTEVVECEDFVSVSPQHLHKLLSSSDLNIENEKQVYNAAIKWLLANPQHHSKWLDETLAQVRLPLLPVDFLMGVVAKEQIVKQNLKCRDLLDEARNYHLHLSSRAVPDFEYSIRTTPRKHTAGVLFCVGGRGGSGDPFRSIECYSINKNSWFFGPEMNSRRRHVGVISVEGKVYAVGGHDGNEHLGSMEMFDPLTNKWMMKASMNTKRRGIALASLGGPIYAIGGLDDNTCFNDVERYDIESDQWSTVAPMNTPRGGVGSVALVNHVYAVGGNDGMASLSSVERYDPHLDKWIEVKEMGQRRAGNGVSKLHGCLYVVGGFDDNSPLSSVERYDPRSNKWDYVAALTTPRGGVGIATVMGKIFAVGGHNGNAYLNTVEAFDPVLNRWELVGSVSHCRAGAGVAVCSCLTSQIRDVGHGSNNVVDCM</sequence>
<keyword id="KW-0007">Acetylation</keyword>
<keyword id="KW-0025">Alternative splicing</keyword>
<keyword id="KW-0880">Kelch repeat</keyword>
<keyword id="KW-1267">Proteomics identification</keyword>
<keyword id="KW-1185">Reference proteome</keyword>
<keyword id="KW-0677">Repeat</keyword>
<keyword id="KW-0833">Ubl conjugation pathway</keyword>
<protein>
    <recommendedName>
        <fullName>Kelch-like protein 8</fullName>
    </recommendedName>
</protein>
<evidence type="ECO:0000255" key="1">
    <source>
        <dbReference type="PROSITE-ProRule" id="PRU00037"/>
    </source>
</evidence>
<evidence type="ECO:0000256" key="2">
    <source>
        <dbReference type="SAM" id="MobiDB-lite"/>
    </source>
</evidence>
<evidence type="ECO:0000269" key="3">
    <source>
    </source>
</evidence>
<evidence type="ECO:0000269" key="4">
    <source>
    </source>
</evidence>
<evidence type="ECO:0000303" key="5">
    <source>
    </source>
</evidence>
<evidence type="ECO:0000305" key="6"/>
<evidence type="ECO:0007744" key="7">
    <source>
    </source>
</evidence>
<proteinExistence type="evidence at protein level"/>
<comment type="function">
    <text evidence="4">Substrate-specific adapter of a BCR (BTB-CUL3-RBX1) E3 ubiquitin ligase complex required for The BCR(KLHL8) ubiquitin ligase complex mediates ubiquitination and degradation of RAPSN.</text>
</comment>
<comment type="pathway">
    <text>Protein modification; protein ubiquitination.</text>
</comment>
<comment type="subunit">
    <text evidence="4">Component of the BCR(KLHL8) E3 ubiquitin ligase complex, at least composed of CUL3, KLHL8 and RBX1. Interacts with RAPSN.</text>
</comment>
<comment type="interaction">
    <interactant intactId="EBI-949008">
        <id>Q9P2G9</id>
    </interactant>
    <interactant intactId="EBI-456129">
        <id>Q13618</id>
        <label>CUL3</label>
    </interactant>
    <organismsDiffer>false</organismsDiffer>
    <experiments>8</experiments>
</comment>
<comment type="interaction">
    <interactant intactId="EBI-11959635">
        <id>Q9P2G9-2</id>
    </interactant>
    <interactant intactId="EBI-10256990">
        <id>Q7Z3E5-2</id>
        <label>ARMC9</label>
    </interactant>
    <organismsDiffer>false</organismsDiffer>
    <experiments>3</experiments>
</comment>
<comment type="interaction">
    <interactant intactId="EBI-11959635">
        <id>Q9P2G9-2</id>
    </interactant>
    <interactant intactId="EBI-718700">
        <id>P35219</id>
        <label>CA8</label>
    </interactant>
    <organismsDiffer>false</organismsDiffer>
    <experiments>3</experiments>
</comment>
<comment type="interaction">
    <interactant intactId="EBI-11959635">
        <id>Q9P2G9-2</id>
    </interactant>
    <interactant intactId="EBI-77321">
        <id>Q9UER7</id>
        <label>DAXX</label>
    </interactant>
    <organismsDiffer>false</organismsDiffer>
    <experiments>3</experiments>
</comment>
<comment type="interaction">
    <interactant intactId="EBI-11959635">
        <id>Q9P2G9-2</id>
    </interactant>
    <interactant intactId="EBI-713568">
        <id>P45984</id>
        <label>MAPK9</label>
    </interactant>
    <organismsDiffer>false</organismsDiffer>
    <experiments>3</experiments>
</comment>
<comment type="interaction">
    <interactant intactId="EBI-11959635">
        <id>Q9P2G9-2</id>
    </interactant>
    <interactant intactId="EBI-11305767">
        <id>P11086</id>
        <label>PNMT</label>
    </interactant>
    <organismsDiffer>false</organismsDiffer>
    <experiments>3</experiments>
</comment>
<comment type="interaction">
    <interactant intactId="EBI-11959635">
        <id>Q9P2G9-2</id>
    </interactant>
    <interactant intactId="EBI-11993088">
        <id>Q6IPC0</id>
        <label>PPM1F</label>
    </interactant>
    <organismsDiffer>false</organismsDiffer>
    <experiments>3</experiments>
</comment>
<comment type="interaction">
    <interactant intactId="EBI-11959635">
        <id>Q9P2G9-2</id>
    </interactant>
    <interactant intactId="EBI-11959637">
        <id>P12271</id>
        <label>RLBP1</label>
    </interactant>
    <organismsDiffer>false</organismsDiffer>
    <experiments>3</experiments>
</comment>
<comment type="interaction">
    <interactant intactId="EBI-11959635">
        <id>Q9P2G9-2</id>
    </interactant>
    <interactant intactId="EBI-749441">
        <id>O00204</id>
        <label>SULT2B1</label>
    </interactant>
    <organismsDiffer>false</organismsDiffer>
    <experiments>3</experiments>
</comment>
<comment type="interaction">
    <interactant intactId="EBI-11959635">
        <id>Q9P2G9-2</id>
    </interactant>
    <interactant intactId="EBI-12306161">
        <id>Q9BY14-2</id>
        <label>TEX101</label>
    </interactant>
    <organismsDiffer>false</organismsDiffer>
    <experiments>3</experiments>
</comment>
<comment type="interaction">
    <interactant intactId="EBI-11959635">
        <id>Q9P2G9-2</id>
    </interactant>
    <interactant intactId="EBI-11992976">
        <id>Q8NBR0</id>
        <label>TP53I13</label>
    </interactant>
    <organismsDiffer>false</organismsDiffer>
    <experiments>3</experiments>
</comment>
<comment type="alternative products">
    <event type="alternative splicing"/>
    <isoform>
        <id>Q9P2G9-1</id>
        <name>1</name>
        <sequence type="displayed"/>
    </isoform>
    <isoform>
        <id>Q9P2G9-2</id>
        <name>2</name>
        <sequence type="described" ref="VSP_054443"/>
    </isoform>
</comment>
<comment type="sequence caution" evidence="6">
    <conflict type="erroneous initiation">
        <sequence resource="EMBL-CDS" id="BAA92616"/>
    </conflict>
</comment>
<feature type="initiator methionine" description="Removed" evidence="7">
    <location>
        <position position="1"/>
    </location>
</feature>
<feature type="chain" id="PRO_0000119108" description="Kelch-like protein 8">
    <location>
        <begin position="2"/>
        <end position="620"/>
    </location>
</feature>
<feature type="domain" description="BTB" evidence="1">
    <location>
        <begin position="67"/>
        <end position="134"/>
    </location>
</feature>
<feature type="domain" description="BACK">
    <location>
        <begin position="169"/>
        <end position="270"/>
    </location>
</feature>
<feature type="repeat" description="Kelch 1">
    <location>
        <begin position="319"/>
        <end position="366"/>
    </location>
</feature>
<feature type="repeat" description="Kelch 2">
    <location>
        <begin position="367"/>
        <end position="413"/>
    </location>
</feature>
<feature type="repeat" description="Kelch 3">
    <location>
        <begin position="415"/>
        <end position="460"/>
    </location>
</feature>
<feature type="repeat" description="Kelch 4">
    <location>
        <begin position="462"/>
        <end position="507"/>
    </location>
</feature>
<feature type="repeat" description="Kelch 5">
    <location>
        <begin position="508"/>
        <end position="554"/>
    </location>
</feature>
<feature type="repeat" description="Kelch 6">
    <location>
        <begin position="556"/>
        <end position="601"/>
    </location>
</feature>
<feature type="region of interest" description="Disordered" evidence="2">
    <location>
        <begin position="1"/>
        <end position="35"/>
    </location>
</feature>
<feature type="compositionally biased region" description="Polar residues" evidence="2">
    <location>
        <begin position="1"/>
        <end position="10"/>
    </location>
</feature>
<feature type="compositionally biased region" description="Basic residues" evidence="2">
    <location>
        <begin position="11"/>
        <end position="22"/>
    </location>
</feature>
<feature type="compositionally biased region" description="Polar residues" evidence="2">
    <location>
        <begin position="23"/>
        <end position="34"/>
    </location>
</feature>
<feature type="modified residue" description="N-acetylalanine" evidence="7">
    <location>
        <position position="2"/>
    </location>
</feature>
<feature type="splice variant" id="VSP_054443" description="In isoform 2." evidence="5">
    <location>
        <begin position="73"/>
        <end position="148"/>
    </location>
</feature>
<feature type="sequence variant" id="VAR_030012" description="In dbSNP:rs17854114." evidence="3">
    <original>P</original>
    <variation>R</variation>
    <location>
        <position position="520"/>
    </location>
</feature>